<reference key="1">
    <citation type="journal article" date="1997" name="J. Bacteriol.">
        <title>Complete genome sequence of Methanobacterium thermoautotrophicum deltaH: functional analysis and comparative genomics.</title>
        <authorList>
            <person name="Smith D.R."/>
            <person name="Doucette-Stamm L.A."/>
            <person name="Deloughery C."/>
            <person name="Lee H.-M."/>
            <person name="Dubois J."/>
            <person name="Aldredge T."/>
            <person name="Bashirzadeh R."/>
            <person name="Blakely D."/>
            <person name="Cook R."/>
            <person name="Gilbert K."/>
            <person name="Harrison D."/>
            <person name="Hoang L."/>
            <person name="Keagle P."/>
            <person name="Lumm W."/>
            <person name="Pothier B."/>
            <person name="Qiu D."/>
            <person name="Spadafora R."/>
            <person name="Vicare R."/>
            <person name="Wang Y."/>
            <person name="Wierzbowski J."/>
            <person name="Gibson R."/>
            <person name="Jiwani N."/>
            <person name="Caruso A."/>
            <person name="Bush D."/>
            <person name="Safer H."/>
            <person name="Patwell D."/>
            <person name="Prabhakar S."/>
            <person name="McDougall S."/>
            <person name="Shimer G."/>
            <person name="Goyal A."/>
            <person name="Pietrovski S."/>
            <person name="Church G.M."/>
            <person name="Daniels C.J."/>
            <person name="Mao J.-I."/>
            <person name="Rice P."/>
            <person name="Noelling J."/>
            <person name="Reeve J.N."/>
        </authorList>
    </citation>
    <scope>NUCLEOTIDE SEQUENCE [LARGE SCALE GENOMIC DNA]</scope>
    <source>
        <strain>ATCC 29096 / DSM 1053 / JCM 10044 / NBRC 100330 / Delta H</strain>
    </source>
</reference>
<accession>O27346</accession>
<gene>
    <name type="ordered locus">MTH_1285</name>
</gene>
<feature type="chain" id="PRO_0000148894" description="Uncharacterized HTH-type transcriptional regulator MTH_1285">
    <location>
        <begin position="1"/>
        <end position="131"/>
    </location>
</feature>
<feature type="domain" description="HTH hxlR-type" evidence="1">
    <location>
        <begin position="26"/>
        <end position="124"/>
    </location>
</feature>
<protein>
    <recommendedName>
        <fullName>Uncharacterized HTH-type transcriptional regulator MTH_1285</fullName>
    </recommendedName>
</protein>
<dbReference type="EMBL" id="AE000666">
    <property type="protein sequence ID" value="AAB85767.1"/>
    <property type="molecule type" value="Genomic_DNA"/>
</dbReference>
<dbReference type="PIR" id="A69038">
    <property type="entry name" value="A69038"/>
</dbReference>
<dbReference type="SMR" id="O27346"/>
<dbReference type="STRING" id="187420.MTH_1285"/>
<dbReference type="PaxDb" id="187420-MTH_1285"/>
<dbReference type="EnsemblBacteria" id="AAB85767">
    <property type="protein sequence ID" value="AAB85767"/>
    <property type="gene ID" value="MTH_1285"/>
</dbReference>
<dbReference type="KEGG" id="mth:MTH_1285"/>
<dbReference type="PATRIC" id="fig|187420.15.peg.1257"/>
<dbReference type="HOGENOM" id="CLU_111585_5_1_2"/>
<dbReference type="InParanoid" id="O27346"/>
<dbReference type="Proteomes" id="UP000005223">
    <property type="component" value="Chromosome"/>
</dbReference>
<dbReference type="GO" id="GO:0003677">
    <property type="term" value="F:DNA binding"/>
    <property type="evidence" value="ECO:0007669"/>
    <property type="project" value="UniProtKB-KW"/>
</dbReference>
<dbReference type="Gene3D" id="1.10.10.10">
    <property type="entry name" value="Winged helix-like DNA-binding domain superfamily/Winged helix DNA-binding domain"/>
    <property type="match status" value="1"/>
</dbReference>
<dbReference type="InterPro" id="IPR002577">
    <property type="entry name" value="HTH_HxlR"/>
</dbReference>
<dbReference type="InterPro" id="IPR036388">
    <property type="entry name" value="WH-like_DNA-bd_sf"/>
</dbReference>
<dbReference type="InterPro" id="IPR036390">
    <property type="entry name" value="WH_DNA-bd_sf"/>
</dbReference>
<dbReference type="PANTHER" id="PTHR33204:SF29">
    <property type="entry name" value="TRANSCRIPTIONAL REGULATOR"/>
    <property type="match status" value="1"/>
</dbReference>
<dbReference type="PANTHER" id="PTHR33204">
    <property type="entry name" value="TRANSCRIPTIONAL REGULATOR, MARR FAMILY"/>
    <property type="match status" value="1"/>
</dbReference>
<dbReference type="Pfam" id="PF01638">
    <property type="entry name" value="HxlR"/>
    <property type="match status" value="1"/>
</dbReference>
<dbReference type="SUPFAM" id="SSF46785">
    <property type="entry name" value="Winged helix' DNA-binding domain"/>
    <property type="match status" value="1"/>
</dbReference>
<dbReference type="PROSITE" id="PS51118">
    <property type="entry name" value="HTH_HXLR"/>
    <property type="match status" value="1"/>
</dbReference>
<evidence type="ECO:0000255" key="1">
    <source>
        <dbReference type="PROSITE-ProRule" id="PRU00435"/>
    </source>
</evidence>
<sequence>MYILTISIPGYSGYSGDDMGDDEYLCSVEVAVNEIGGKWKSLVLCTLKDGKLRFSEINRRIPKITQRMLTRTLRELESSGLINREVYPEVPPRVEYCLTEKGKSVIPILDALCEWGKMYGSHQENSGEKAP</sequence>
<keyword id="KW-0238">DNA-binding</keyword>
<keyword id="KW-1185">Reference proteome</keyword>
<keyword id="KW-0804">Transcription</keyword>
<keyword id="KW-0805">Transcription regulation</keyword>
<proteinExistence type="predicted"/>
<name>Y1285_METTH</name>
<organism>
    <name type="scientific">Methanothermobacter thermautotrophicus (strain ATCC 29096 / DSM 1053 / JCM 10044 / NBRC 100330 / Delta H)</name>
    <name type="common">Methanobacterium thermoautotrophicum</name>
    <dbReference type="NCBI Taxonomy" id="187420"/>
    <lineage>
        <taxon>Archaea</taxon>
        <taxon>Methanobacteriati</taxon>
        <taxon>Methanobacteriota</taxon>
        <taxon>Methanomada group</taxon>
        <taxon>Methanobacteria</taxon>
        <taxon>Methanobacteriales</taxon>
        <taxon>Methanobacteriaceae</taxon>
        <taxon>Methanothermobacter</taxon>
    </lineage>
</organism>